<name>RS12_LACAC</name>
<feature type="chain" id="PRO_0000226392" description="Small ribosomal subunit protein uS12">
    <location>
        <begin position="1"/>
        <end position="135"/>
    </location>
</feature>
<feature type="region of interest" description="Disordered" evidence="2">
    <location>
        <begin position="1"/>
        <end position="20"/>
    </location>
</feature>
<feature type="compositionally biased region" description="Basic residues" evidence="2">
    <location>
        <begin position="9"/>
        <end position="18"/>
    </location>
</feature>
<proteinExistence type="inferred from homology"/>
<evidence type="ECO:0000255" key="1">
    <source>
        <dbReference type="HAMAP-Rule" id="MF_00403"/>
    </source>
</evidence>
<evidence type="ECO:0000256" key="2">
    <source>
        <dbReference type="SAM" id="MobiDB-lite"/>
    </source>
</evidence>
<evidence type="ECO:0000305" key="3"/>
<keyword id="KW-1185">Reference proteome</keyword>
<keyword id="KW-0687">Ribonucleoprotein</keyword>
<keyword id="KW-0689">Ribosomal protein</keyword>
<keyword id="KW-0694">RNA-binding</keyword>
<keyword id="KW-0699">rRNA-binding</keyword>
<keyword id="KW-0820">tRNA-binding</keyword>
<accession>Q5FM94</accession>
<comment type="function">
    <text evidence="1">With S4 and S5 plays an important role in translational accuracy.</text>
</comment>
<comment type="function">
    <text evidence="1">Interacts with and stabilizes bases of the 16S rRNA that are involved in tRNA selection in the A site and with the mRNA backbone. Located at the interface of the 30S and 50S subunits, it traverses the body of the 30S subunit contacting proteins on the other side and probably holding the rRNA structure together. The combined cluster of proteins S8, S12 and S17 appears to hold together the shoulder and platform of the 30S subunit.</text>
</comment>
<comment type="subunit">
    <text evidence="1">Part of the 30S ribosomal subunit. Contacts proteins S8 and S17. May interact with IF1 in the 30S initiation complex.</text>
</comment>
<comment type="similarity">
    <text evidence="1">Belongs to the universal ribosomal protein uS12 family.</text>
</comment>
<comment type="caution">
    <text evidence="3">Because the enzyme that would modify Asp-102 to 3-methylthioaspartic acid has not been found in the proteome of this organism, that modification is not predicted.</text>
</comment>
<gene>
    <name evidence="1" type="primary">rpsL</name>
    <name type="ordered locus">LBA0287</name>
</gene>
<dbReference type="EMBL" id="CP000033">
    <property type="protein sequence ID" value="AAV42180.1"/>
    <property type="molecule type" value="Genomic_DNA"/>
</dbReference>
<dbReference type="RefSeq" id="WP_003549020.1">
    <property type="nucleotide sequence ID" value="NC_006814.3"/>
</dbReference>
<dbReference type="RefSeq" id="YP_193211.1">
    <property type="nucleotide sequence ID" value="NC_006814.3"/>
</dbReference>
<dbReference type="SMR" id="Q5FM94"/>
<dbReference type="STRING" id="272621.LBA0287"/>
<dbReference type="GeneID" id="93290605"/>
<dbReference type="KEGG" id="lac:LBA0287"/>
<dbReference type="PATRIC" id="fig|272621.13.peg.272"/>
<dbReference type="eggNOG" id="COG0048">
    <property type="taxonomic scope" value="Bacteria"/>
</dbReference>
<dbReference type="HOGENOM" id="CLU_104295_1_1_9"/>
<dbReference type="OrthoDB" id="9802366at2"/>
<dbReference type="BioCyc" id="LACI272621:G1G49-281-MONOMER"/>
<dbReference type="Proteomes" id="UP000006381">
    <property type="component" value="Chromosome"/>
</dbReference>
<dbReference type="GO" id="GO:0015935">
    <property type="term" value="C:small ribosomal subunit"/>
    <property type="evidence" value="ECO:0007669"/>
    <property type="project" value="InterPro"/>
</dbReference>
<dbReference type="GO" id="GO:0019843">
    <property type="term" value="F:rRNA binding"/>
    <property type="evidence" value="ECO:0007669"/>
    <property type="project" value="UniProtKB-UniRule"/>
</dbReference>
<dbReference type="GO" id="GO:0003735">
    <property type="term" value="F:structural constituent of ribosome"/>
    <property type="evidence" value="ECO:0007669"/>
    <property type="project" value="InterPro"/>
</dbReference>
<dbReference type="GO" id="GO:0000049">
    <property type="term" value="F:tRNA binding"/>
    <property type="evidence" value="ECO:0007669"/>
    <property type="project" value="UniProtKB-UniRule"/>
</dbReference>
<dbReference type="GO" id="GO:0006412">
    <property type="term" value="P:translation"/>
    <property type="evidence" value="ECO:0007669"/>
    <property type="project" value="UniProtKB-UniRule"/>
</dbReference>
<dbReference type="CDD" id="cd03368">
    <property type="entry name" value="Ribosomal_S12"/>
    <property type="match status" value="1"/>
</dbReference>
<dbReference type="FunFam" id="2.40.50.140:FF:000001">
    <property type="entry name" value="30S ribosomal protein S12"/>
    <property type="match status" value="1"/>
</dbReference>
<dbReference type="Gene3D" id="2.40.50.140">
    <property type="entry name" value="Nucleic acid-binding proteins"/>
    <property type="match status" value="1"/>
</dbReference>
<dbReference type="HAMAP" id="MF_00403_B">
    <property type="entry name" value="Ribosomal_uS12_B"/>
    <property type="match status" value="1"/>
</dbReference>
<dbReference type="InterPro" id="IPR012340">
    <property type="entry name" value="NA-bd_OB-fold"/>
</dbReference>
<dbReference type="InterPro" id="IPR006032">
    <property type="entry name" value="Ribosomal_uS12"/>
</dbReference>
<dbReference type="InterPro" id="IPR005679">
    <property type="entry name" value="Ribosomal_uS12_bac"/>
</dbReference>
<dbReference type="NCBIfam" id="TIGR00981">
    <property type="entry name" value="rpsL_bact"/>
    <property type="match status" value="1"/>
</dbReference>
<dbReference type="PANTHER" id="PTHR11652">
    <property type="entry name" value="30S RIBOSOMAL PROTEIN S12 FAMILY MEMBER"/>
    <property type="match status" value="1"/>
</dbReference>
<dbReference type="Pfam" id="PF00164">
    <property type="entry name" value="Ribosom_S12_S23"/>
    <property type="match status" value="1"/>
</dbReference>
<dbReference type="PIRSF" id="PIRSF002133">
    <property type="entry name" value="Ribosomal_S12/S23"/>
    <property type="match status" value="1"/>
</dbReference>
<dbReference type="PRINTS" id="PR01034">
    <property type="entry name" value="RIBOSOMALS12"/>
</dbReference>
<dbReference type="SUPFAM" id="SSF50249">
    <property type="entry name" value="Nucleic acid-binding proteins"/>
    <property type="match status" value="1"/>
</dbReference>
<dbReference type="PROSITE" id="PS00055">
    <property type="entry name" value="RIBOSOMAL_S12"/>
    <property type="match status" value="1"/>
</dbReference>
<organism>
    <name type="scientific">Lactobacillus acidophilus (strain ATCC 700396 / NCK56 / N2 / NCFM)</name>
    <dbReference type="NCBI Taxonomy" id="272621"/>
    <lineage>
        <taxon>Bacteria</taxon>
        <taxon>Bacillati</taxon>
        <taxon>Bacillota</taxon>
        <taxon>Bacilli</taxon>
        <taxon>Lactobacillales</taxon>
        <taxon>Lactobacillaceae</taxon>
        <taxon>Lactobacillus</taxon>
    </lineage>
</organism>
<protein>
    <recommendedName>
        <fullName evidence="1">Small ribosomal subunit protein uS12</fullName>
    </recommendedName>
    <alternativeName>
        <fullName evidence="3">30S ribosomal protein S12</fullName>
    </alternativeName>
</protein>
<sequence>MPTINQLVRKGRHSKVTKSKSPALNYSYNSMKKESVFNPAPQMRGVATRVGTMTPKKPNSALRKYARVRLSNLIEVTAYIPGEGHNLQEHSVVLIRGGRVKDLPGVRYHIVRGALDTAGVEGRKQSRSKYGTKKD</sequence>
<reference key="1">
    <citation type="journal article" date="2005" name="Proc. Natl. Acad. Sci. U.S.A.">
        <title>Complete genome sequence of the probiotic lactic acid bacterium Lactobacillus acidophilus NCFM.</title>
        <authorList>
            <person name="Altermann E."/>
            <person name="Russell W.M."/>
            <person name="Azcarate-Peril M.A."/>
            <person name="Barrangou R."/>
            <person name="Buck B.L."/>
            <person name="McAuliffe O."/>
            <person name="Souther N."/>
            <person name="Dobson A."/>
            <person name="Duong T."/>
            <person name="Callanan M."/>
            <person name="Lick S."/>
            <person name="Hamrick A."/>
            <person name="Cano R."/>
            <person name="Klaenhammer T.R."/>
        </authorList>
    </citation>
    <scope>NUCLEOTIDE SEQUENCE [LARGE SCALE GENOMIC DNA]</scope>
    <source>
        <strain>ATCC 700396 / NCK56 / N2 / NCFM</strain>
    </source>
</reference>